<evidence type="ECO:0000255" key="1">
    <source>
        <dbReference type="HAMAP-Rule" id="MF_00167"/>
    </source>
</evidence>
<evidence type="ECO:0000269" key="2">
    <source>
    </source>
</evidence>
<evidence type="ECO:0000303" key="3">
    <source>
    </source>
</evidence>
<evidence type="ECO:0007829" key="4">
    <source>
        <dbReference type="PDB" id="2BTI"/>
    </source>
</evidence>
<comment type="function">
    <text evidence="1">A key translational regulator that binds mRNA to regulate translation initiation and/or mRNA stability. Mediates global changes in gene expression, shifting from rapid growth to stress survival by linking envelope stress, the stringent response and the catabolite repression systems. Usually binds in the 5'-UTR; binding at or near the Shine-Dalgarno sequence prevents ribosome-binding, repressing translation, binding elsewhere in the 5'-UTR can activate translation and/or stabilize the mRNA. Its function is antagonized by small RNA(s).</text>
</comment>
<comment type="subunit">
    <text evidence="1 2">Homodimer; the beta-strands of each monomer intercalate to form a hydrophobic core while the alpha-helices form wings that extend away from the core (PubMed:16359708).</text>
</comment>
<comment type="subcellular location">
    <subcellularLocation>
        <location evidence="1">Cytoplasm</location>
    </subcellularLocation>
</comment>
<comment type="similarity">
    <text evidence="1">Belongs to the CsrA/RsmA family.</text>
</comment>
<sequence length="61" mass="6853">MLILTRRVGETLMIGDEVTVTVLGVKGNQVRIGVNAPKEVSVHREEIYQRIQAEKSQPTTY</sequence>
<dbReference type="EMBL" id="AM286415">
    <property type="protein sequence ID" value="CAL10935.1"/>
    <property type="molecule type" value="Genomic_DNA"/>
</dbReference>
<dbReference type="RefSeq" id="WP_002209449.1">
    <property type="nucleotide sequence ID" value="NC_008800.1"/>
</dbReference>
<dbReference type="RefSeq" id="YP_001005173.1">
    <property type="nucleotide sequence ID" value="NC_008800.1"/>
</dbReference>
<dbReference type="PDB" id="2BTI">
    <property type="method" value="X-ray"/>
    <property type="resolution" value="2.00 A"/>
    <property type="chains" value="A/B=1-61"/>
</dbReference>
<dbReference type="PDBsum" id="2BTI"/>
<dbReference type="SMR" id="A1JK11"/>
<dbReference type="GeneID" id="97457422"/>
<dbReference type="KEGG" id="yen:YE0835"/>
<dbReference type="PATRIC" id="fig|393305.7.peg.929"/>
<dbReference type="eggNOG" id="COG1551">
    <property type="taxonomic scope" value="Bacteria"/>
</dbReference>
<dbReference type="HOGENOM" id="CLU_164837_2_1_6"/>
<dbReference type="OrthoDB" id="9809061at2"/>
<dbReference type="EvolutionaryTrace" id="A1JK11"/>
<dbReference type="PRO" id="PR:A1JK11"/>
<dbReference type="Proteomes" id="UP000000642">
    <property type="component" value="Chromosome"/>
</dbReference>
<dbReference type="GO" id="GO:0005829">
    <property type="term" value="C:cytosol"/>
    <property type="evidence" value="ECO:0007669"/>
    <property type="project" value="TreeGrafter"/>
</dbReference>
<dbReference type="GO" id="GO:0048027">
    <property type="term" value="F:mRNA 5'-UTR binding"/>
    <property type="evidence" value="ECO:0007669"/>
    <property type="project" value="UniProtKB-UniRule"/>
</dbReference>
<dbReference type="GO" id="GO:0006402">
    <property type="term" value="P:mRNA catabolic process"/>
    <property type="evidence" value="ECO:0007669"/>
    <property type="project" value="InterPro"/>
</dbReference>
<dbReference type="GO" id="GO:0045947">
    <property type="term" value="P:negative regulation of translational initiation"/>
    <property type="evidence" value="ECO:0007669"/>
    <property type="project" value="UniProtKB-UniRule"/>
</dbReference>
<dbReference type="GO" id="GO:0045948">
    <property type="term" value="P:positive regulation of translational initiation"/>
    <property type="evidence" value="ECO:0007669"/>
    <property type="project" value="UniProtKB-UniRule"/>
</dbReference>
<dbReference type="GO" id="GO:0006109">
    <property type="term" value="P:regulation of carbohydrate metabolic process"/>
    <property type="evidence" value="ECO:0007669"/>
    <property type="project" value="UniProtKB-UniRule"/>
</dbReference>
<dbReference type="FunFam" id="2.60.40.4380:FF:000001">
    <property type="entry name" value="Translational regulator CsrA"/>
    <property type="match status" value="1"/>
</dbReference>
<dbReference type="Gene3D" id="2.60.40.4380">
    <property type="entry name" value="Translational regulator CsrA"/>
    <property type="match status" value="1"/>
</dbReference>
<dbReference type="HAMAP" id="MF_00167">
    <property type="entry name" value="CsrA"/>
    <property type="match status" value="1"/>
</dbReference>
<dbReference type="InterPro" id="IPR003751">
    <property type="entry name" value="CsrA"/>
</dbReference>
<dbReference type="InterPro" id="IPR036107">
    <property type="entry name" value="CsrA_sf"/>
</dbReference>
<dbReference type="NCBIfam" id="TIGR00202">
    <property type="entry name" value="csrA"/>
    <property type="match status" value="1"/>
</dbReference>
<dbReference type="NCBIfam" id="NF002469">
    <property type="entry name" value="PRK01712.1"/>
    <property type="match status" value="1"/>
</dbReference>
<dbReference type="PANTHER" id="PTHR34984">
    <property type="entry name" value="CARBON STORAGE REGULATOR"/>
    <property type="match status" value="1"/>
</dbReference>
<dbReference type="PANTHER" id="PTHR34984:SF1">
    <property type="entry name" value="CARBON STORAGE REGULATOR"/>
    <property type="match status" value="1"/>
</dbReference>
<dbReference type="Pfam" id="PF02599">
    <property type="entry name" value="CsrA"/>
    <property type="match status" value="1"/>
</dbReference>
<dbReference type="SUPFAM" id="SSF117130">
    <property type="entry name" value="CsrA-like"/>
    <property type="match status" value="1"/>
</dbReference>
<accession>A1JK11</accession>
<protein>
    <recommendedName>
        <fullName evidence="1">Translational regulator CsrA</fullName>
    </recommendedName>
    <alternativeName>
        <fullName evidence="1">Carbon storage regulator</fullName>
    </alternativeName>
    <alternativeName>
        <fullName evidence="3">Post-transcriptional regulator RsmA</fullName>
    </alternativeName>
</protein>
<name>CSRA_YERE8</name>
<gene>
    <name evidence="1" type="primary">csrA</name>
    <name evidence="3" type="synonym">rsmA</name>
    <name type="ordered locus">YE0835</name>
</gene>
<organism>
    <name type="scientific">Yersinia enterocolitica serotype O:8 / biotype 1B (strain NCTC 13174 / 8081)</name>
    <dbReference type="NCBI Taxonomy" id="393305"/>
    <lineage>
        <taxon>Bacteria</taxon>
        <taxon>Pseudomonadati</taxon>
        <taxon>Pseudomonadota</taxon>
        <taxon>Gammaproteobacteria</taxon>
        <taxon>Enterobacterales</taxon>
        <taxon>Yersiniaceae</taxon>
        <taxon>Yersinia</taxon>
    </lineage>
</organism>
<feature type="chain" id="PRO_1000023442" description="Translational regulator CsrA">
    <location>
        <begin position="1"/>
        <end position="61"/>
    </location>
</feature>
<feature type="strand" evidence="4">
    <location>
        <begin position="1"/>
        <end position="7"/>
    </location>
</feature>
<feature type="strand" evidence="4">
    <location>
        <begin position="11"/>
        <end position="14"/>
    </location>
</feature>
<feature type="turn" evidence="4">
    <location>
        <begin position="15"/>
        <end position="17"/>
    </location>
</feature>
<feature type="strand" evidence="4">
    <location>
        <begin position="18"/>
        <end position="26"/>
    </location>
</feature>
<feature type="strand" evidence="4">
    <location>
        <begin position="29"/>
        <end position="36"/>
    </location>
</feature>
<feature type="strand" evidence="4">
    <location>
        <begin position="42"/>
        <end position="44"/>
    </location>
</feature>
<feature type="helix" evidence="4">
    <location>
        <begin position="45"/>
        <end position="55"/>
    </location>
</feature>
<keyword id="KW-0002">3D-structure</keyword>
<keyword id="KW-0010">Activator</keyword>
<keyword id="KW-0963">Cytoplasm</keyword>
<keyword id="KW-0678">Repressor</keyword>
<keyword id="KW-0694">RNA-binding</keyword>
<keyword id="KW-0810">Translation regulation</keyword>
<reference key="1">
    <citation type="journal article" date="2006" name="PLoS Genet.">
        <title>The complete genome sequence and comparative genome analysis of the high pathogenicity Yersinia enterocolitica strain 8081.</title>
        <authorList>
            <person name="Thomson N.R."/>
            <person name="Howard S."/>
            <person name="Wren B.W."/>
            <person name="Holden M.T.G."/>
            <person name="Crossman L."/>
            <person name="Challis G.L."/>
            <person name="Churcher C."/>
            <person name="Mungall K."/>
            <person name="Brooks K."/>
            <person name="Chillingworth T."/>
            <person name="Feltwell T."/>
            <person name="Abdellah Z."/>
            <person name="Hauser H."/>
            <person name="Jagels K."/>
            <person name="Maddison M."/>
            <person name="Moule S."/>
            <person name="Sanders M."/>
            <person name="Whitehead S."/>
            <person name="Quail M.A."/>
            <person name="Dougan G."/>
            <person name="Parkhill J."/>
            <person name="Prentice M.B."/>
        </authorList>
    </citation>
    <scope>NUCLEOTIDE SEQUENCE [LARGE SCALE GENOMIC DNA]</scope>
    <source>
        <strain>NCTC 13174 / 8081</strain>
    </source>
</reference>
<reference key="2">
    <citation type="journal article" date="2006" name="J. Mol. Biol.">
        <title>Functional analysis of the post-transcriptional regulator RsmA reveals a novel RNA-binding site.</title>
        <authorList>
            <person name="Heeb S."/>
            <person name="Kuehne S.A."/>
            <person name="Bycroft M."/>
            <person name="Crivii S."/>
            <person name="Allen M.D."/>
            <person name="Haas D."/>
            <person name="Camara M."/>
            <person name="Williams P."/>
        </authorList>
    </citation>
    <scope>X-RAY CRYSTALLOGRAPHY (2.00 ANGSTROMS)</scope>
    <source>
        <strain>NCTC 13174 / 8081</strain>
    </source>
</reference>
<proteinExistence type="evidence at protein level"/>